<evidence type="ECO:0000255" key="1">
    <source>
        <dbReference type="HAMAP-Rule" id="MF_00818"/>
    </source>
</evidence>
<feature type="chain" id="PRO_0000247680" description="NADPH-dependent 7-cyano-7-deazaguanine reductase">
    <location>
        <begin position="1"/>
        <end position="116"/>
    </location>
</feature>
<feature type="active site" description="Thioimide intermediate" evidence="1">
    <location>
        <position position="31"/>
    </location>
</feature>
<feature type="active site" description="Proton donor" evidence="1">
    <location>
        <position position="38"/>
    </location>
</feature>
<feature type="binding site" evidence="1">
    <location>
        <begin position="53"/>
        <end position="55"/>
    </location>
    <ligand>
        <name>substrate</name>
    </ligand>
</feature>
<feature type="binding site" evidence="1">
    <location>
        <begin position="72"/>
        <end position="73"/>
    </location>
    <ligand>
        <name>substrate</name>
    </ligand>
</feature>
<gene>
    <name evidence="1" type="primary">queF</name>
    <name type="ordered locus">Cag_1759</name>
</gene>
<protein>
    <recommendedName>
        <fullName evidence="1">NADPH-dependent 7-cyano-7-deazaguanine reductase</fullName>
        <ecNumber evidence="1">1.7.1.13</ecNumber>
    </recommendedName>
    <alternativeName>
        <fullName evidence="1">7-cyano-7-carbaguanine reductase</fullName>
    </alternativeName>
    <alternativeName>
        <fullName evidence="1">NADPH-dependent nitrile oxidoreductase</fullName>
    </alternativeName>
    <alternativeName>
        <fullName evidence="1">PreQ(0) reductase</fullName>
    </alternativeName>
</protein>
<comment type="function">
    <text evidence="1">Catalyzes the NADPH-dependent reduction of 7-cyano-7-deazaguanine (preQ0) to 7-aminomethyl-7-deazaguanine (preQ1).</text>
</comment>
<comment type="catalytic activity">
    <reaction evidence="1">
        <text>7-aminomethyl-7-carbaguanine + 2 NADP(+) = 7-cyano-7-deazaguanine + 2 NADPH + 3 H(+)</text>
        <dbReference type="Rhea" id="RHEA:13409"/>
        <dbReference type="ChEBI" id="CHEBI:15378"/>
        <dbReference type="ChEBI" id="CHEBI:45075"/>
        <dbReference type="ChEBI" id="CHEBI:57783"/>
        <dbReference type="ChEBI" id="CHEBI:58349"/>
        <dbReference type="ChEBI" id="CHEBI:58703"/>
        <dbReference type="EC" id="1.7.1.13"/>
    </reaction>
</comment>
<comment type="pathway">
    <text evidence="1">tRNA modification; tRNA-queuosine biosynthesis.</text>
</comment>
<comment type="subcellular location">
    <subcellularLocation>
        <location evidence="1">Cytoplasm</location>
    </subcellularLocation>
</comment>
<comment type="similarity">
    <text evidence="1">Belongs to the GTP cyclohydrolase I family. QueF type 1 subfamily.</text>
</comment>
<keyword id="KW-0963">Cytoplasm</keyword>
<keyword id="KW-0521">NADP</keyword>
<keyword id="KW-0560">Oxidoreductase</keyword>
<keyword id="KW-0671">Queuosine biosynthesis</keyword>
<organism>
    <name type="scientific">Chlorobium chlorochromatii (strain CaD3)</name>
    <dbReference type="NCBI Taxonomy" id="340177"/>
    <lineage>
        <taxon>Bacteria</taxon>
        <taxon>Pseudomonadati</taxon>
        <taxon>Chlorobiota</taxon>
        <taxon>Chlorobiia</taxon>
        <taxon>Chlorobiales</taxon>
        <taxon>Chlorobiaceae</taxon>
        <taxon>Chlorobium/Pelodictyon group</taxon>
        <taxon>Chlorobium</taxon>
    </lineage>
</organism>
<sequence length="116" mass="13455">MKLEILESFENKYPNRDYTIEIVNPEFTSVCPITGLPDFGTITIRYVPNQRCVELKSLKYYFFEFRNAGIFYENITNKVLDDMVALLEPRSISVITEWKARGGITETVSVHYTSQS</sequence>
<name>QUEF_CHLCH</name>
<proteinExistence type="inferred from homology"/>
<reference key="1">
    <citation type="submission" date="2005-08" db="EMBL/GenBank/DDBJ databases">
        <title>Complete sequence of Chlorobium chlorochromatii CaD3.</title>
        <authorList>
            <consortium name="US DOE Joint Genome Institute"/>
            <person name="Copeland A."/>
            <person name="Lucas S."/>
            <person name="Lapidus A."/>
            <person name="Barry K."/>
            <person name="Detter J.C."/>
            <person name="Glavina T."/>
            <person name="Hammon N."/>
            <person name="Israni S."/>
            <person name="Pitluck S."/>
            <person name="Bryant D."/>
            <person name="Schmutz J."/>
            <person name="Larimer F."/>
            <person name="Land M."/>
            <person name="Kyrpides N."/>
            <person name="Ivanova N."/>
            <person name="Richardson P."/>
        </authorList>
    </citation>
    <scope>NUCLEOTIDE SEQUENCE [LARGE SCALE GENOMIC DNA]</scope>
    <source>
        <strain>CaD3</strain>
    </source>
</reference>
<accession>Q3APR5</accession>
<dbReference type="EC" id="1.7.1.13" evidence="1"/>
<dbReference type="EMBL" id="CP000108">
    <property type="protein sequence ID" value="ABB29010.1"/>
    <property type="molecule type" value="Genomic_DNA"/>
</dbReference>
<dbReference type="SMR" id="Q3APR5"/>
<dbReference type="STRING" id="340177.Cag_1759"/>
<dbReference type="KEGG" id="cch:Cag_1759"/>
<dbReference type="eggNOG" id="COG0780">
    <property type="taxonomic scope" value="Bacteria"/>
</dbReference>
<dbReference type="HOGENOM" id="CLU_102489_1_0_10"/>
<dbReference type="OrthoDB" id="9795077at2"/>
<dbReference type="UniPathway" id="UPA00392"/>
<dbReference type="GO" id="GO:0005737">
    <property type="term" value="C:cytoplasm"/>
    <property type="evidence" value="ECO:0007669"/>
    <property type="project" value="UniProtKB-SubCell"/>
</dbReference>
<dbReference type="GO" id="GO:0033739">
    <property type="term" value="F:preQ1 synthase activity"/>
    <property type="evidence" value="ECO:0007669"/>
    <property type="project" value="UniProtKB-UniRule"/>
</dbReference>
<dbReference type="GO" id="GO:0008616">
    <property type="term" value="P:queuosine biosynthetic process"/>
    <property type="evidence" value="ECO:0007669"/>
    <property type="project" value="UniProtKB-UniRule"/>
</dbReference>
<dbReference type="GO" id="GO:0006400">
    <property type="term" value="P:tRNA modification"/>
    <property type="evidence" value="ECO:0007669"/>
    <property type="project" value="UniProtKB-UniRule"/>
</dbReference>
<dbReference type="Gene3D" id="3.30.1130.10">
    <property type="match status" value="1"/>
</dbReference>
<dbReference type="HAMAP" id="MF_00818">
    <property type="entry name" value="QueF_type1"/>
    <property type="match status" value="1"/>
</dbReference>
<dbReference type="InterPro" id="IPR043133">
    <property type="entry name" value="GTP-CH-I_C/QueF"/>
</dbReference>
<dbReference type="InterPro" id="IPR050084">
    <property type="entry name" value="NADPH_dep_7-cyano-7-deazaG_red"/>
</dbReference>
<dbReference type="InterPro" id="IPR029500">
    <property type="entry name" value="QueF"/>
</dbReference>
<dbReference type="InterPro" id="IPR016856">
    <property type="entry name" value="QueF_type1"/>
</dbReference>
<dbReference type="NCBIfam" id="TIGR03139">
    <property type="entry name" value="QueF-II"/>
    <property type="match status" value="1"/>
</dbReference>
<dbReference type="PANTHER" id="PTHR34354">
    <property type="entry name" value="NADPH-DEPENDENT 7-CYANO-7-DEAZAGUANINE REDUCTASE"/>
    <property type="match status" value="1"/>
</dbReference>
<dbReference type="PANTHER" id="PTHR34354:SF1">
    <property type="entry name" value="NADPH-DEPENDENT 7-CYANO-7-DEAZAGUANINE REDUCTASE"/>
    <property type="match status" value="1"/>
</dbReference>
<dbReference type="Pfam" id="PF14489">
    <property type="entry name" value="QueF"/>
    <property type="match status" value="1"/>
</dbReference>
<dbReference type="PIRSF" id="PIRSF027377">
    <property type="entry name" value="Nitrile_oxidored_QueF"/>
    <property type="match status" value="1"/>
</dbReference>
<dbReference type="SUPFAM" id="SSF55620">
    <property type="entry name" value="Tetrahydrobiopterin biosynthesis enzymes-like"/>
    <property type="match status" value="1"/>
</dbReference>